<evidence type="ECO:0000255" key="1"/>
<evidence type="ECO:0000269" key="2">
    <source>
    </source>
</evidence>
<evidence type="ECO:0000303" key="3">
    <source>
    </source>
</evidence>
<evidence type="ECO:0000305" key="4"/>
<evidence type="ECO:0000305" key="5">
    <source>
    </source>
</evidence>
<sequence length="212" mass="23201">MFAEYGVLNYWTYLVGAIFIVLVPGPNTLFVLKNSVSSGMKGGYLAACGVFIGDAVLMFLAWAGVATLIKTTPILFNIVRYLGAFYLLYLGSKILYATLKGKNSEAKSDEPQYGAIFKRALILSLTNPKAILFYVSFFVQFIDVNAPHTGISFFILAATLELVSFCYLSFLIISGAFVTQYIRTKKKLAKVGNSLIGLMFVGFAARLATLQS</sequence>
<dbReference type="EMBL" id="U00096">
    <property type="protein sequence ID" value="AAC74868.1"/>
    <property type="molecule type" value="Genomic_DNA"/>
</dbReference>
<dbReference type="EMBL" id="AP009048">
    <property type="protein sequence ID" value="BAA15593.1"/>
    <property type="molecule type" value="Genomic_DNA"/>
</dbReference>
<dbReference type="PIR" id="F64940">
    <property type="entry name" value="F64940"/>
</dbReference>
<dbReference type="RefSeq" id="NP_416312.1">
    <property type="nucleotide sequence ID" value="NC_000913.3"/>
</dbReference>
<dbReference type="RefSeq" id="WP_000457206.1">
    <property type="nucleotide sequence ID" value="NZ_LN832404.1"/>
</dbReference>
<dbReference type="BioGRID" id="4260333">
    <property type="interactions" value="34"/>
</dbReference>
<dbReference type="FunCoup" id="P76249">
    <property type="interactions" value="130"/>
</dbReference>
<dbReference type="STRING" id="511145.b1798"/>
<dbReference type="TCDB" id="2.A.76.1.5">
    <property type="family name" value="the resistance to homoserine/threonine (rhtb) family"/>
</dbReference>
<dbReference type="PaxDb" id="511145-b1798"/>
<dbReference type="EnsemblBacteria" id="AAC74868">
    <property type="protein sequence ID" value="AAC74868"/>
    <property type="gene ID" value="b1798"/>
</dbReference>
<dbReference type="GeneID" id="946157"/>
<dbReference type="KEGG" id="ecj:JW1787"/>
<dbReference type="KEGG" id="eco:b1798"/>
<dbReference type="KEGG" id="ecoc:C3026_10250"/>
<dbReference type="PATRIC" id="fig|1411691.4.peg.455"/>
<dbReference type="EchoBASE" id="EB3278"/>
<dbReference type="eggNOG" id="COG1280">
    <property type="taxonomic scope" value="Bacteria"/>
</dbReference>
<dbReference type="HOGENOM" id="CLU_079569_3_1_6"/>
<dbReference type="InParanoid" id="P76249"/>
<dbReference type="OMA" id="AGVWCGD"/>
<dbReference type="OrthoDB" id="9784202at2"/>
<dbReference type="PhylomeDB" id="P76249"/>
<dbReference type="BioCyc" id="EcoCyc:G6984-MONOMER"/>
<dbReference type="BioCyc" id="MetaCyc:G6984-MONOMER"/>
<dbReference type="PRO" id="PR:P76249"/>
<dbReference type="Proteomes" id="UP000000625">
    <property type="component" value="Chromosome"/>
</dbReference>
<dbReference type="GO" id="GO:0005886">
    <property type="term" value="C:plasma membrane"/>
    <property type="evidence" value="ECO:0000314"/>
    <property type="project" value="EcoCyc"/>
</dbReference>
<dbReference type="GO" id="GO:0015297">
    <property type="term" value="F:antiporter activity"/>
    <property type="evidence" value="ECO:0007669"/>
    <property type="project" value="UniProtKB-KW"/>
</dbReference>
<dbReference type="GO" id="GO:0015190">
    <property type="term" value="F:L-leucine transmembrane transporter activity"/>
    <property type="evidence" value="ECO:0000315"/>
    <property type="project" value="EcoCyc"/>
</dbReference>
<dbReference type="GO" id="GO:0015820">
    <property type="term" value="P:L-leucine transport"/>
    <property type="evidence" value="ECO:0000315"/>
    <property type="project" value="EcoCyc"/>
</dbReference>
<dbReference type="InterPro" id="IPR001123">
    <property type="entry name" value="LeuE-type"/>
</dbReference>
<dbReference type="NCBIfam" id="NF008201">
    <property type="entry name" value="PRK10958.1"/>
    <property type="match status" value="1"/>
</dbReference>
<dbReference type="PANTHER" id="PTHR30086">
    <property type="entry name" value="ARGININE EXPORTER PROTEIN ARGO"/>
    <property type="match status" value="1"/>
</dbReference>
<dbReference type="PANTHER" id="PTHR30086:SF15">
    <property type="entry name" value="LEUCINE EFFLUX PROTEIN"/>
    <property type="match status" value="1"/>
</dbReference>
<dbReference type="Pfam" id="PF01810">
    <property type="entry name" value="LysE"/>
    <property type="match status" value="1"/>
</dbReference>
<dbReference type="PIRSF" id="PIRSF006324">
    <property type="entry name" value="LeuE"/>
    <property type="match status" value="1"/>
</dbReference>
<comment type="function">
    <text evidence="2">Exporter of leucine. Can also transport its natural analog L-alpha-amino-n-butyric acid and some other structurally unrelated amino acids. Leucine excretion is probably driven by proton motive force.</text>
</comment>
<comment type="catalytic activity">
    <reaction evidence="5">
        <text>L-leucine(in) + H(+)(out) = L-leucine(out) + H(+)(in)</text>
        <dbReference type="Rhea" id="RHEA:28731"/>
        <dbReference type="ChEBI" id="CHEBI:15378"/>
        <dbReference type="ChEBI" id="CHEBI:57427"/>
    </reaction>
    <physiologicalReaction direction="left-to-right" evidence="5">
        <dbReference type="Rhea" id="RHEA:28732"/>
    </physiologicalReaction>
</comment>
<comment type="activity regulation">
    <text evidence="2">Leucine export is inhibited by the proton ionophore carbonyl cyanide m-chlorophenylhydrazone (CCCP).</text>
</comment>
<comment type="subcellular location">
    <subcellularLocation>
        <location evidence="4">Cell inner membrane</location>
        <topology evidence="1">Multi-pass membrane protein</topology>
    </subcellularLocation>
</comment>
<comment type="induction">
    <text evidence="2">Induced by leucine, L-alpha-amino-n-butyric acid and, to a lesser extent, by several other amino acids. This induction is mediated by lrp.</text>
</comment>
<comment type="similarity">
    <text evidence="4">Belongs to the Rht family.</text>
</comment>
<accession>P76249</accession>
<accession>O07969</accession>
<accession>O07971</accession>
<proteinExistence type="evidence at protein level"/>
<gene>
    <name evidence="3" type="primary">leuE</name>
    <name type="synonym">yeaS</name>
    <name type="ordered locus">b1798</name>
    <name type="ordered locus">JW1787</name>
</gene>
<reference key="1">
    <citation type="journal article" date="1996" name="DNA Res.">
        <title>A 460-kb DNA sequence of the Escherichia coli K-12 genome corresponding to the 40.1-50.0 min region on the linkage map.</title>
        <authorList>
            <person name="Itoh T."/>
            <person name="Aiba H."/>
            <person name="Baba T."/>
            <person name="Fujita K."/>
            <person name="Hayashi K."/>
            <person name="Inada T."/>
            <person name="Isono K."/>
            <person name="Kasai H."/>
            <person name="Kimura S."/>
            <person name="Kitakawa M."/>
            <person name="Kitagawa M."/>
            <person name="Makino K."/>
            <person name="Miki T."/>
            <person name="Mizobuchi K."/>
            <person name="Mori H."/>
            <person name="Mori T."/>
            <person name="Motomura K."/>
            <person name="Nakade S."/>
            <person name="Nakamura Y."/>
            <person name="Nashimoto H."/>
            <person name="Nishio Y."/>
            <person name="Oshima T."/>
            <person name="Saito N."/>
            <person name="Sampei G."/>
            <person name="Seki Y."/>
            <person name="Sivasundaram S."/>
            <person name="Tagami H."/>
            <person name="Takeda J."/>
            <person name="Takemoto K."/>
            <person name="Wada C."/>
            <person name="Yamamoto Y."/>
            <person name="Horiuchi T."/>
        </authorList>
    </citation>
    <scope>NUCLEOTIDE SEQUENCE [LARGE SCALE GENOMIC DNA]</scope>
    <source>
        <strain>K12 / W3110 / ATCC 27325 / DSM 5911</strain>
    </source>
</reference>
<reference key="2">
    <citation type="journal article" date="1997" name="Science">
        <title>The complete genome sequence of Escherichia coli K-12.</title>
        <authorList>
            <person name="Blattner F.R."/>
            <person name="Plunkett G. III"/>
            <person name="Bloch C.A."/>
            <person name="Perna N.T."/>
            <person name="Burland V."/>
            <person name="Riley M."/>
            <person name="Collado-Vides J."/>
            <person name="Glasner J.D."/>
            <person name="Rode C.K."/>
            <person name="Mayhew G.F."/>
            <person name="Gregor J."/>
            <person name="Davis N.W."/>
            <person name="Kirkpatrick H.A."/>
            <person name="Goeden M.A."/>
            <person name="Rose D.J."/>
            <person name="Mau B."/>
            <person name="Shao Y."/>
        </authorList>
    </citation>
    <scope>NUCLEOTIDE SEQUENCE [LARGE SCALE GENOMIC DNA]</scope>
    <source>
        <strain>K12 / MG1655 / ATCC 47076</strain>
    </source>
</reference>
<reference key="3">
    <citation type="journal article" date="2006" name="Mol. Syst. Biol.">
        <title>Highly accurate genome sequences of Escherichia coli K-12 strains MG1655 and W3110.</title>
        <authorList>
            <person name="Hayashi K."/>
            <person name="Morooka N."/>
            <person name="Yamamoto Y."/>
            <person name="Fujita K."/>
            <person name="Isono K."/>
            <person name="Choi S."/>
            <person name="Ohtsubo E."/>
            <person name="Baba T."/>
            <person name="Wanner B.L."/>
            <person name="Mori H."/>
            <person name="Horiuchi T."/>
        </authorList>
    </citation>
    <scope>NUCLEOTIDE SEQUENCE [LARGE SCALE GENOMIC DNA]</scope>
    <source>
        <strain>K12 / W3110 / ATCC 27325 / DSM 5911</strain>
    </source>
</reference>
<reference key="4">
    <citation type="journal article" date="2005" name="FEBS Lett.">
        <title>The yeaS (leuE) gene of Escherichia coli encodes an exporter of leucine, and the Lrp protein regulates its expression.</title>
        <authorList>
            <person name="Kutukova E.A."/>
            <person name="Livshits V.A."/>
            <person name="Altman I.P."/>
            <person name="Ptitsyn L.R."/>
            <person name="Zyiatdinov M.H."/>
            <person name="Tokmakova I.L."/>
            <person name="Zakataeva N.P."/>
        </authorList>
    </citation>
    <scope>FUNCTION IN LEUCINE EFFLUX</scope>
    <scope>ACTIVITY REGULATION</scope>
    <scope>INDUCTION</scope>
    <source>
        <strain>K12 / MG1655 / ATCC 47076</strain>
    </source>
</reference>
<feature type="chain" id="PRO_0000094742" description="Leucine efflux protein">
    <location>
        <begin position="1"/>
        <end position="212"/>
    </location>
</feature>
<feature type="transmembrane region" description="Helical" evidence="1">
    <location>
        <begin position="12"/>
        <end position="32"/>
    </location>
</feature>
<feature type="transmembrane region" description="Helical" evidence="1">
    <location>
        <begin position="49"/>
        <end position="69"/>
    </location>
</feature>
<feature type="transmembrane region" description="Helical" evidence="1">
    <location>
        <begin position="71"/>
        <end position="91"/>
    </location>
</feature>
<feature type="transmembrane region" description="Helical" evidence="1">
    <location>
        <begin position="122"/>
        <end position="142"/>
    </location>
</feature>
<feature type="transmembrane region" description="Helical" evidence="1">
    <location>
        <begin position="153"/>
        <end position="173"/>
    </location>
</feature>
<feature type="transmembrane region" description="Helical" evidence="1">
    <location>
        <begin position="188"/>
        <end position="208"/>
    </location>
</feature>
<protein>
    <recommendedName>
        <fullName evidence="4">Leucine efflux protein</fullName>
    </recommendedName>
</protein>
<name>LEUE_ECOLI</name>
<organism>
    <name type="scientific">Escherichia coli (strain K12)</name>
    <dbReference type="NCBI Taxonomy" id="83333"/>
    <lineage>
        <taxon>Bacteria</taxon>
        <taxon>Pseudomonadati</taxon>
        <taxon>Pseudomonadota</taxon>
        <taxon>Gammaproteobacteria</taxon>
        <taxon>Enterobacterales</taxon>
        <taxon>Enterobacteriaceae</taxon>
        <taxon>Escherichia</taxon>
    </lineage>
</organism>
<keyword id="KW-0029">Amino-acid transport</keyword>
<keyword id="KW-0050">Antiport</keyword>
<keyword id="KW-0997">Cell inner membrane</keyword>
<keyword id="KW-1003">Cell membrane</keyword>
<keyword id="KW-0472">Membrane</keyword>
<keyword id="KW-1185">Reference proteome</keyword>
<keyword id="KW-0812">Transmembrane</keyword>
<keyword id="KW-1133">Transmembrane helix</keyword>
<keyword id="KW-0813">Transport</keyword>